<feature type="chain" id="PRO_0000340448" description="Urease accessory protein UreD">
    <location>
        <begin position="1"/>
        <end position="283"/>
    </location>
</feature>
<feature type="region of interest" description="Disordered" evidence="3">
    <location>
        <begin position="1"/>
        <end position="21"/>
    </location>
</feature>
<feature type="sequence conflict" description="In Ref. 1; BAA88558." evidence="6" ref="1">
    <original>L</original>
    <variation>I</variation>
    <location>
        <position position="222"/>
    </location>
</feature>
<feature type="sequence conflict" description="In Ref. 1; BAA88558." evidence="6" ref="1">
    <original>L</original>
    <variation>E</variation>
    <location>
        <position position="241"/>
    </location>
</feature>
<feature type="sequence conflict" description="In Ref. 1; BAA88558." evidence="6" ref="1">
    <original>I</original>
    <variation>V</variation>
    <location>
        <position position="258"/>
    </location>
</feature>
<proteinExistence type="evidence at transcript level"/>
<organism>
    <name type="scientific">Corynebacterium glutamicum (strain ATCC 13032 / DSM 20300 / JCM 1318 / BCRC 11384 / CCUG 27702 / LMG 3730 / NBRC 12168 / NCIMB 10025 / NRRL B-2784 / 534)</name>
    <dbReference type="NCBI Taxonomy" id="196627"/>
    <lineage>
        <taxon>Bacteria</taxon>
        <taxon>Bacillati</taxon>
        <taxon>Actinomycetota</taxon>
        <taxon>Actinomycetes</taxon>
        <taxon>Mycobacteriales</taxon>
        <taxon>Corynebacteriaceae</taxon>
        <taxon>Corynebacterium</taxon>
    </lineage>
</organism>
<sequence>MTQTQPVGTLRLTIDDQGPQGQSRAVEQFHQGALRVIRPHYLDDSGQVCYTIIAIGGGYLGGDVYEQQFTIKDNAKALITTQSATKIYRTPQGPATQHTEINVGENAVLEYLADQTIAYREATYHQFTKVALHPSATFVMSEQITPGWHPDGKHFAYDEMRLHTEITDSTTGRLVLLDNLLLRPDSREGSFGWTEQYTHSGQMIVMGEGVDKQLVAELNEQLAAHPDVYGAVNFLSAPGTLLRGFIARTLSNRTEELINLHEHIASLLRGRWRGQEPVNLRKY</sequence>
<protein>
    <recommendedName>
        <fullName evidence="2">Urease accessory protein UreD</fullName>
    </recommendedName>
</protein>
<evidence type="ECO:0000250" key="1"/>
<evidence type="ECO:0000255" key="2">
    <source>
        <dbReference type="HAMAP-Rule" id="MF_01384"/>
    </source>
</evidence>
<evidence type="ECO:0000256" key="3">
    <source>
        <dbReference type="SAM" id="MobiDB-lite"/>
    </source>
</evidence>
<evidence type="ECO:0000269" key="4">
    <source>
    </source>
</evidence>
<evidence type="ECO:0000269" key="5">
    <source>
    </source>
</evidence>
<evidence type="ECO:0000305" key="6"/>
<name>URED_CORGL</name>
<keyword id="KW-0143">Chaperone</keyword>
<keyword id="KW-0963">Cytoplasm</keyword>
<keyword id="KW-0996">Nickel insertion</keyword>
<keyword id="KW-1185">Reference proteome</keyword>
<gene>
    <name evidence="2" type="primary">ureD1</name>
    <name type="ordered locus">Cgl0090</name>
    <name type="ordered locus">cg0119</name>
</gene>
<comment type="function">
    <text evidence="1">Probably acts in the maturation of urease via the functional incorporation of the urease nickel metallocenter (By similarity). Required for urease expression.</text>
</comment>
<comment type="subunit">
    <text evidence="2">UreD, UreF and UreG form a complex that acts as a GTP-hydrolysis-dependent molecular chaperone, activating the urease apoprotein by helping to assemble the nickel containing metallocenter of UreC. The UreE protein probably delivers the nickel.</text>
</comment>
<comment type="subcellular location">
    <subcellularLocation>
        <location evidence="2">Cytoplasm</location>
    </subcellularLocation>
</comment>
<comment type="induction">
    <text evidence="5">By urea and nitrogen starvation.</text>
</comment>
<comment type="disruption phenotype">
    <text evidence="4">Cells are urease negative and are no longer able to transport urea.</text>
</comment>
<comment type="similarity">
    <text evidence="2">Belongs to the UreD family.</text>
</comment>
<comment type="sequence caution" evidence="6">
    <conflict type="frameshift">
        <sequence resource="EMBL-CDS" id="BAA88558"/>
    </conflict>
</comment>
<dbReference type="EMBL" id="AB029154">
    <property type="protein sequence ID" value="BAA88558.1"/>
    <property type="status" value="ALT_FRAME"/>
    <property type="molecule type" value="Genomic_DNA"/>
</dbReference>
<dbReference type="EMBL" id="AJ251883">
    <property type="protein sequence ID" value="CAB81941.1"/>
    <property type="molecule type" value="Genomic_DNA"/>
</dbReference>
<dbReference type="EMBL" id="BA000036">
    <property type="protein sequence ID" value="BAB97483.1"/>
    <property type="molecule type" value="Genomic_DNA"/>
</dbReference>
<dbReference type="EMBL" id="BX927148">
    <property type="protein sequence ID" value="CAF18658.1"/>
    <property type="molecule type" value="Genomic_DNA"/>
</dbReference>
<dbReference type="RefSeq" id="NP_599342.1">
    <property type="nucleotide sequence ID" value="NC_003450.3"/>
</dbReference>
<dbReference type="RefSeq" id="WP_011013381.1">
    <property type="nucleotide sequence ID" value="NC_006958.1"/>
</dbReference>
<dbReference type="SMR" id="Q79VJ0"/>
<dbReference type="STRING" id="196627.cg0119"/>
<dbReference type="KEGG" id="cgb:cg0119"/>
<dbReference type="KEGG" id="cgl:Cgl0090"/>
<dbReference type="PATRIC" id="fig|196627.13.peg.91"/>
<dbReference type="eggNOG" id="COG0829">
    <property type="taxonomic scope" value="Bacteria"/>
</dbReference>
<dbReference type="HOGENOM" id="CLU_056339_5_0_11"/>
<dbReference type="OrthoDB" id="9807968at2"/>
<dbReference type="BioCyc" id="CORYNE:G18NG-9639-MONOMER"/>
<dbReference type="Proteomes" id="UP000000582">
    <property type="component" value="Chromosome"/>
</dbReference>
<dbReference type="Proteomes" id="UP000001009">
    <property type="component" value="Chromosome"/>
</dbReference>
<dbReference type="GO" id="GO:0005737">
    <property type="term" value="C:cytoplasm"/>
    <property type="evidence" value="ECO:0007669"/>
    <property type="project" value="UniProtKB-SubCell"/>
</dbReference>
<dbReference type="GO" id="GO:0016151">
    <property type="term" value="F:nickel cation binding"/>
    <property type="evidence" value="ECO:0007669"/>
    <property type="project" value="UniProtKB-UniRule"/>
</dbReference>
<dbReference type="HAMAP" id="MF_01384">
    <property type="entry name" value="UreD"/>
    <property type="match status" value="1"/>
</dbReference>
<dbReference type="InterPro" id="IPR002669">
    <property type="entry name" value="UreD"/>
</dbReference>
<dbReference type="PANTHER" id="PTHR33643">
    <property type="entry name" value="UREASE ACCESSORY PROTEIN D"/>
    <property type="match status" value="1"/>
</dbReference>
<dbReference type="PANTHER" id="PTHR33643:SF1">
    <property type="entry name" value="UREASE ACCESSORY PROTEIN D"/>
    <property type="match status" value="1"/>
</dbReference>
<dbReference type="Pfam" id="PF01774">
    <property type="entry name" value="UreD"/>
    <property type="match status" value="1"/>
</dbReference>
<accession>Q79VJ0</accession>
<accession>Q9L416</accession>
<accession>Q9RHM0</accession>
<reference key="1">
    <citation type="journal article" date="2000" name="DNA Seq.">
        <title>Structure of the urease operon of Corynebacterium glutamicum.</title>
        <authorList>
            <person name="Puskas L.G."/>
            <person name="Inui M."/>
            <person name="Yukawa H."/>
        </authorList>
    </citation>
    <scope>NUCLEOTIDE SEQUENCE [GENOMIC DNA]</scope>
    <scope>INDUCTION</scope>
    <source>
        <strain>ATCC 13869 / DSMZ 1412 / NCIMB 9567</strain>
    </source>
</reference>
<reference key="2">
    <citation type="journal article" date="2000" name="FEMS Microbiol. Lett.">
        <title>Urease of Corynebacterium glutamicum: organization of corresponding genes and investigation of activity.</title>
        <authorList>
            <person name="Nolden L."/>
            <person name="Beckers G."/>
            <person name="Moeckel B."/>
            <person name="Pfefferle W."/>
            <person name="Nampoothiri K.M."/>
            <person name="Kraemer R."/>
            <person name="Burkovski A."/>
        </authorList>
    </citation>
    <scope>NUCLEOTIDE SEQUENCE [GENOMIC DNA]</scope>
    <scope>PROBABLE OPERON STRUCTURE</scope>
    <scope>DISRUPTION PHENOTYPE</scope>
    <source>
        <strain>ATCC 13032 / DSM 20300 / JCM 1318 / BCRC 11384 / CCUG 27702 / LMG 3730 / NBRC 12168 / NCIMB 10025 / NRRL B-2784 / 534</strain>
    </source>
</reference>
<reference key="3">
    <citation type="journal article" date="2003" name="Appl. Microbiol. Biotechnol.">
        <title>The Corynebacterium glutamicum genome: features and impacts on biotechnological processes.</title>
        <authorList>
            <person name="Ikeda M."/>
            <person name="Nakagawa S."/>
        </authorList>
    </citation>
    <scope>NUCLEOTIDE SEQUENCE [LARGE SCALE GENOMIC DNA]</scope>
    <source>
        <strain>ATCC 13032 / DSM 20300 / JCM 1318 / BCRC 11384 / CCUG 27702 / LMG 3730 / NBRC 12168 / NCIMB 10025 / NRRL B-2784 / 534</strain>
    </source>
</reference>
<reference key="4">
    <citation type="journal article" date="2003" name="J. Biotechnol.">
        <title>The complete Corynebacterium glutamicum ATCC 13032 genome sequence and its impact on the production of L-aspartate-derived amino acids and vitamins.</title>
        <authorList>
            <person name="Kalinowski J."/>
            <person name="Bathe B."/>
            <person name="Bartels D."/>
            <person name="Bischoff N."/>
            <person name="Bott M."/>
            <person name="Burkovski A."/>
            <person name="Dusch N."/>
            <person name="Eggeling L."/>
            <person name="Eikmanns B.J."/>
            <person name="Gaigalat L."/>
            <person name="Goesmann A."/>
            <person name="Hartmann M."/>
            <person name="Huthmacher K."/>
            <person name="Kraemer R."/>
            <person name="Linke B."/>
            <person name="McHardy A.C."/>
            <person name="Meyer F."/>
            <person name="Moeckel B."/>
            <person name="Pfefferle W."/>
            <person name="Puehler A."/>
            <person name="Rey D.A."/>
            <person name="Rueckert C."/>
            <person name="Rupp O."/>
            <person name="Sahm H."/>
            <person name="Wendisch V.F."/>
            <person name="Wiegraebe I."/>
            <person name="Tauch A."/>
        </authorList>
    </citation>
    <scope>NUCLEOTIDE SEQUENCE [LARGE SCALE GENOMIC DNA]</scope>
    <source>
        <strain>ATCC 13032 / DSM 20300 / JCM 1318 / BCRC 11384 / CCUG 27702 / LMG 3730 / NBRC 12168 / NCIMB 10025 / NRRL B-2784 / 534</strain>
    </source>
</reference>